<keyword id="KW-0007">Acetylation</keyword>
<keyword id="KW-0333">Golgi apparatus</keyword>
<keyword id="KW-0472">Membrane</keyword>
<keyword id="KW-0539">Nucleus</keyword>
<keyword id="KW-0597">Phosphoprotein</keyword>
<keyword id="KW-1185">Reference proteome</keyword>
<keyword id="KW-0694">RNA-binding</keyword>
<keyword id="KW-0812">Transmembrane</keyword>
<keyword id="KW-1133">Transmembrane helix</keyword>
<proteinExistence type="evidence at transcript level"/>
<protein>
    <recommendedName>
        <fullName>Protein unc-50 homolog</fullName>
    </recommendedName>
    <alternativeName>
        <fullName>Periodontal ligament-specific protein 22</fullName>
        <shortName>PDLs22</shortName>
    </alternativeName>
</protein>
<comment type="function">
    <text evidence="1">Involved in the cell surface expression of neuronal nicotinic receptors (By similarity). Binds RNA (By similarity).</text>
</comment>
<comment type="subcellular location">
    <subcellularLocation>
        <location evidence="1">Nucleus inner membrane</location>
        <topology evidence="1">Multi-pass membrane protein</topology>
    </subcellularLocation>
    <subcellularLocation>
        <location evidence="2">Golgi apparatus membrane</location>
        <topology evidence="2">Multi-pass membrane protein</topology>
    </subcellularLocation>
</comment>
<comment type="tissue specificity">
    <text evidence="4">Highly expressed in periodontal ligament and bone marrow, but not in gingival fibroblasts.</text>
</comment>
<comment type="similarity">
    <text evidence="5">Belongs to the unc-50 family.</text>
</comment>
<evidence type="ECO:0000250" key="1">
    <source>
        <dbReference type="UniProtKB" id="O55227"/>
    </source>
</evidence>
<evidence type="ECO:0000250" key="2">
    <source>
        <dbReference type="UniProtKB" id="Q53HI1"/>
    </source>
</evidence>
<evidence type="ECO:0000255" key="3"/>
<evidence type="ECO:0000269" key="4">
    <source>
    </source>
</evidence>
<evidence type="ECO:0000305" key="5"/>
<gene>
    <name type="primary">Unc50</name>
</gene>
<sequence length="259" mass="30429">MLPSTSLSSSMHGNGVLNSRDAARHTAGAKRYKYLRRLFRFRQMDFEFAAWQMLYLFTSPQRVYRNFHYRKQTKDQWARDDPAFLVLLSIWLCVSTIGFGFVLDMGFFETIKLLLWVVFIDCVGVGLLISTLMWFVSNKYLVKRQSRDYDVEWGYAFDVHLNAFYPLLVILHFIQLFFINHVILTDTFIGYLVGNTLWLIAVGYYIYVTFLGYSALPFLKNTVILLYPFAPLMVLYGLSLALGWNFTHTLCSFYKYRVK</sequence>
<feature type="chain" id="PRO_0000308962" description="Protein unc-50 homolog">
    <location>
        <begin position="1"/>
        <end position="259"/>
    </location>
</feature>
<feature type="topological domain" description="Cytoplasmic" evidence="3">
    <location>
        <begin position="1"/>
        <end position="82"/>
    </location>
</feature>
<feature type="transmembrane region" description="Helical" evidence="3">
    <location>
        <begin position="83"/>
        <end position="103"/>
    </location>
</feature>
<feature type="topological domain" description="Lumenal" evidence="3">
    <location>
        <begin position="104"/>
        <end position="112"/>
    </location>
</feature>
<feature type="transmembrane region" description="Helical" evidence="3">
    <location>
        <begin position="113"/>
        <end position="133"/>
    </location>
</feature>
<feature type="topological domain" description="Cytoplasmic" evidence="3">
    <location>
        <begin position="134"/>
        <end position="163"/>
    </location>
</feature>
<feature type="transmembrane region" description="Helical" evidence="3">
    <location>
        <begin position="164"/>
        <end position="184"/>
    </location>
</feature>
<feature type="topological domain" description="Lumenal" evidence="3">
    <location>
        <begin position="185"/>
        <end position="187"/>
    </location>
</feature>
<feature type="transmembrane region" description="Helical" evidence="3">
    <location>
        <begin position="188"/>
        <end position="208"/>
    </location>
</feature>
<feature type="topological domain" description="Cytoplasmic" evidence="3">
    <location>
        <begin position="209"/>
        <end position="222"/>
    </location>
</feature>
<feature type="transmembrane region" description="Helical" evidence="3">
    <location>
        <begin position="223"/>
        <end position="243"/>
    </location>
</feature>
<feature type="topological domain" description="Lumenal" evidence="3">
    <location>
        <begin position="244"/>
        <end position="259"/>
    </location>
</feature>
<feature type="modified residue" description="N-acetylmethionine" evidence="2">
    <location>
        <position position="1"/>
    </location>
</feature>
<feature type="modified residue" description="Phosphoserine" evidence="2">
    <location>
        <position position="6"/>
    </location>
</feature>
<organism>
    <name type="scientific">Mus musculus</name>
    <name type="common">Mouse</name>
    <dbReference type="NCBI Taxonomy" id="10090"/>
    <lineage>
        <taxon>Eukaryota</taxon>
        <taxon>Metazoa</taxon>
        <taxon>Chordata</taxon>
        <taxon>Craniata</taxon>
        <taxon>Vertebrata</taxon>
        <taxon>Euteleostomi</taxon>
        <taxon>Mammalia</taxon>
        <taxon>Eutheria</taxon>
        <taxon>Euarchontoglires</taxon>
        <taxon>Glires</taxon>
        <taxon>Rodentia</taxon>
        <taxon>Myomorpha</taxon>
        <taxon>Muroidea</taxon>
        <taxon>Muridae</taxon>
        <taxon>Murinae</taxon>
        <taxon>Mus</taxon>
        <taxon>Mus</taxon>
    </lineage>
</organism>
<dbReference type="EMBL" id="AY017214">
    <property type="protein sequence ID" value="AAK08986.1"/>
    <property type="molecule type" value="mRNA"/>
</dbReference>
<dbReference type="EMBL" id="AK003273">
    <property type="protein sequence ID" value="BAB22683.1"/>
    <property type="molecule type" value="mRNA"/>
</dbReference>
<dbReference type="EMBL" id="AK004433">
    <property type="protein sequence ID" value="BAB23302.1"/>
    <property type="molecule type" value="mRNA"/>
</dbReference>
<dbReference type="EMBL" id="AK132757">
    <property type="protein sequence ID" value="BAE21338.1"/>
    <property type="molecule type" value="mRNA"/>
</dbReference>
<dbReference type="EMBL" id="AK135885">
    <property type="protein sequence ID" value="BAE22715.1"/>
    <property type="molecule type" value="mRNA"/>
</dbReference>
<dbReference type="EMBL" id="BC019484">
    <property type="protein sequence ID" value="AAH19484.1"/>
    <property type="molecule type" value="mRNA"/>
</dbReference>
<dbReference type="CCDS" id="CCDS14892.1"/>
<dbReference type="RefSeq" id="NP_001343457.1">
    <property type="nucleotide sequence ID" value="NM_001356528.1"/>
</dbReference>
<dbReference type="RefSeq" id="NP_080399.1">
    <property type="nucleotide sequence ID" value="NM_026123.4"/>
</dbReference>
<dbReference type="RefSeq" id="XP_006496283.1">
    <property type="nucleotide sequence ID" value="XM_006496220.5"/>
</dbReference>
<dbReference type="RefSeq" id="XP_006496284.1">
    <property type="nucleotide sequence ID" value="XM_006496221.5"/>
</dbReference>
<dbReference type="RefSeq" id="XP_006496285.1">
    <property type="nucleotide sequence ID" value="XM_006496222.3"/>
</dbReference>
<dbReference type="RefSeq" id="XP_006496286.1">
    <property type="nucleotide sequence ID" value="XM_006496223.5"/>
</dbReference>
<dbReference type="RefSeq" id="XP_030098205.1">
    <property type="nucleotide sequence ID" value="XM_030242345.2"/>
</dbReference>
<dbReference type="RefSeq" id="XP_036009020.1">
    <property type="nucleotide sequence ID" value="XM_036153127.1"/>
</dbReference>
<dbReference type="RefSeq" id="XP_036009022.1">
    <property type="nucleotide sequence ID" value="XM_036153129.1"/>
</dbReference>
<dbReference type="BioGRID" id="212151">
    <property type="interactions" value="2"/>
</dbReference>
<dbReference type="FunCoup" id="Q9CQ61">
    <property type="interactions" value="3463"/>
</dbReference>
<dbReference type="STRING" id="10090.ENSMUSP00000027285"/>
<dbReference type="PhosphoSitePlus" id="Q9CQ61"/>
<dbReference type="SwissPalm" id="Q9CQ61"/>
<dbReference type="PaxDb" id="10090-ENSMUSP00000027285"/>
<dbReference type="ProteomicsDB" id="300198"/>
<dbReference type="Pumba" id="Q9CQ61"/>
<dbReference type="Antibodypedia" id="17600">
    <property type="antibodies" value="63 antibodies from 22 providers"/>
</dbReference>
<dbReference type="DNASU" id="67387"/>
<dbReference type="Ensembl" id="ENSMUST00000027285.13">
    <property type="protein sequence ID" value="ENSMUSP00000027285.7"/>
    <property type="gene ID" value="ENSMUSG00000026111.16"/>
</dbReference>
<dbReference type="Ensembl" id="ENSMUST00000114925.10">
    <property type="protein sequence ID" value="ENSMUSP00000110575.4"/>
    <property type="gene ID" value="ENSMUSG00000026111.16"/>
</dbReference>
<dbReference type="Ensembl" id="ENSMUST00000118059.3">
    <property type="protein sequence ID" value="ENSMUSP00000113135.2"/>
    <property type="gene ID" value="ENSMUSG00000026111.16"/>
</dbReference>
<dbReference type="GeneID" id="67387"/>
<dbReference type="KEGG" id="mmu:67387"/>
<dbReference type="UCSC" id="uc007arp.1">
    <property type="organism name" value="mouse"/>
</dbReference>
<dbReference type="AGR" id="MGI:1914637"/>
<dbReference type="CTD" id="25972"/>
<dbReference type="MGI" id="MGI:1914637">
    <property type="gene designation" value="Unc50"/>
</dbReference>
<dbReference type="VEuPathDB" id="HostDB:ENSMUSG00000026111"/>
<dbReference type="eggNOG" id="KOG3012">
    <property type="taxonomic scope" value="Eukaryota"/>
</dbReference>
<dbReference type="GeneTree" id="ENSGT00390000018553"/>
<dbReference type="InParanoid" id="Q9CQ61"/>
<dbReference type="OMA" id="YRNFMYR"/>
<dbReference type="OrthoDB" id="10027013at2759"/>
<dbReference type="PhylomeDB" id="Q9CQ61"/>
<dbReference type="TreeFam" id="TF105624"/>
<dbReference type="BioGRID-ORCS" id="67387">
    <property type="hits" value="5 hits in 81 CRISPR screens"/>
</dbReference>
<dbReference type="ChiTaRS" id="Unc50">
    <property type="organism name" value="mouse"/>
</dbReference>
<dbReference type="PRO" id="PR:Q9CQ61"/>
<dbReference type="Proteomes" id="UP000000589">
    <property type="component" value="Chromosome 1"/>
</dbReference>
<dbReference type="RNAct" id="Q9CQ61">
    <property type="molecule type" value="protein"/>
</dbReference>
<dbReference type="Bgee" id="ENSMUSG00000026111">
    <property type="expression patterns" value="Expressed in animal zygote and 263 other cell types or tissues"/>
</dbReference>
<dbReference type="ExpressionAtlas" id="Q9CQ61">
    <property type="expression patterns" value="baseline and differential"/>
</dbReference>
<dbReference type="GO" id="GO:0005794">
    <property type="term" value="C:Golgi apparatus"/>
    <property type="evidence" value="ECO:0000314"/>
    <property type="project" value="MGI"/>
</dbReference>
<dbReference type="GO" id="GO:0000139">
    <property type="term" value="C:Golgi membrane"/>
    <property type="evidence" value="ECO:0007669"/>
    <property type="project" value="UniProtKB-SubCell"/>
</dbReference>
<dbReference type="GO" id="GO:0005637">
    <property type="term" value="C:nuclear inner membrane"/>
    <property type="evidence" value="ECO:0000250"/>
    <property type="project" value="UniProtKB"/>
</dbReference>
<dbReference type="GO" id="GO:0003723">
    <property type="term" value="F:RNA binding"/>
    <property type="evidence" value="ECO:0000250"/>
    <property type="project" value="UniProtKB"/>
</dbReference>
<dbReference type="GO" id="GO:0034394">
    <property type="term" value="P:protein localization to cell surface"/>
    <property type="evidence" value="ECO:0000250"/>
    <property type="project" value="UniProtKB"/>
</dbReference>
<dbReference type="InterPro" id="IPR007881">
    <property type="entry name" value="UNC-50"/>
</dbReference>
<dbReference type="PANTHER" id="PTHR12841">
    <property type="entry name" value="PROTEIN UNC-50 HOMOLOG"/>
    <property type="match status" value="1"/>
</dbReference>
<dbReference type="PANTHER" id="PTHR12841:SF6">
    <property type="entry name" value="PROTEIN UNC-50 HOMOLOG"/>
    <property type="match status" value="1"/>
</dbReference>
<dbReference type="Pfam" id="PF05216">
    <property type="entry name" value="UNC-50"/>
    <property type="match status" value="1"/>
</dbReference>
<reference key="1">
    <citation type="submission" date="2001-01" db="EMBL/GenBank/DDBJ databases">
        <authorList>
            <person name="Yu L."/>
        </authorList>
    </citation>
    <scope>NUCLEOTIDE SEQUENCE [MRNA]</scope>
</reference>
<reference key="2">
    <citation type="journal article" date="2005" name="Science">
        <title>The transcriptional landscape of the mammalian genome.</title>
        <authorList>
            <person name="Carninci P."/>
            <person name="Kasukawa T."/>
            <person name="Katayama S."/>
            <person name="Gough J."/>
            <person name="Frith M.C."/>
            <person name="Maeda N."/>
            <person name="Oyama R."/>
            <person name="Ravasi T."/>
            <person name="Lenhard B."/>
            <person name="Wells C."/>
            <person name="Kodzius R."/>
            <person name="Shimokawa K."/>
            <person name="Bajic V.B."/>
            <person name="Brenner S.E."/>
            <person name="Batalov S."/>
            <person name="Forrest A.R."/>
            <person name="Zavolan M."/>
            <person name="Davis M.J."/>
            <person name="Wilming L.G."/>
            <person name="Aidinis V."/>
            <person name="Allen J.E."/>
            <person name="Ambesi-Impiombato A."/>
            <person name="Apweiler R."/>
            <person name="Aturaliya R.N."/>
            <person name="Bailey T.L."/>
            <person name="Bansal M."/>
            <person name="Baxter L."/>
            <person name="Beisel K.W."/>
            <person name="Bersano T."/>
            <person name="Bono H."/>
            <person name="Chalk A.M."/>
            <person name="Chiu K.P."/>
            <person name="Choudhary V."/>
            <person name="Christoffels A."/>
            <person name="Clutterbuck D.R."/>
            <person name="Crowe M.L."/>
            <person name="Dalla E."/>
            <person name="Dalrymple B.P."/>
            <person name="de Bono B."/>
            <person name="Della Gatta G."/>
            <person name="di Bernardo D."/>
            <person name="Down T."/>
            <person name="Engstrom P."/>
            <person name="Fagiolini M."/>
            <person name="Faulkner G."/>
            <person name="Fletcher C.F."/>
            <person name="Fukushima T."/>
            <person name="Furuno M."/>
            <person name="Futaki S."/>
            <person name="Gariboldi M."/>
            <person name="Georgii-Hemming P."/>
            <person name="Gingeras T.R."/>
            <person name="Gojobori T."/>
            <person name="Green R.E."/>
            <person name="Gustincich S."/>
            <person name="Harbers M."/>
            <person name="Hayashi Y."/>
            <person name="Hensch T.K."/>
            <person name="Hirokawa N."/>
            <person name="Hill D."/>
            <person name="Huminiecki L."/>
            <person name="Iacono M."/>
            <person name="Ikeo K."/>
            <person name="Iwama A."/>
            <person name="Ishikawa T."/>
            <person name="Jakt M."/>
            <person name="Kanapin A."/>
            <person name="Katoh M."/>
            <person name="Kawasawa Y."/>
            <person name="Kelso J."/>
            <person name="Kitamura H."/>
            <person name="Kitano H."/>
            <person name="Kollias G."/>
            <person name="Krishnan S.P."/>
            <person name="Kruger A."/>
            <person name="Kummerfeld S.K."/>
            <person name="Kurochkin I.V."/>
            <person name="Lareau L.F."/>
            <person name="Lazarevic D."/>
            <person name="Lipovich L."/>
            <person name="Liu J."/>
            <person name="Liuni S."/>
            <person name="McWilliam S."/>
            <person name="Madan Babu M."/>
            <person name="Madera M."/>
            <person name="Marchionni L."/>
            <person name="Matsuda H."/>
            <person name="Matsuzawa S."/>
            <person name="Miki H."/>
            <person name="Mignone F."/>
            <person name="Miyake S."/>
            <person name="Morris K."/>
            <person name="Mottagui-Tabar S."/>
            <person name="Mulder N."/>
            <person name="Nakano N."/>
            <person name="Nakauchi H."/>
            <person name="Ng P."/>
            <person name="Nilsson R."/>
            <person name="Nishiguchi S."/>
            <person name="Nishikawa S."/>
            <person name="Nori F."/>
            <person name="Ohara O."/>
            <person name="Okazaki Y."/>
            <person name="Orlando V."/>
            <person name="Pang K.C."/>
            <person name="Pavan W.J."/>
            <person name="Pavesi G."/>
            <person name="Pesole G."/>
            <person name="Petrovsky N."/>
            <person name="Piazza S."/>
            <person name="Reed J."/>
            <person name="Reid J.F."/>
            <person name="Ring B.Z."/>
            <person name="Ringwald M."/>
            <person name="Rost B."/>
            <person name="Ruan Y."/>
            <person name="Salzberg S.L."/>
            <person name="Sandelin A."/>
            <person name="Schneider C."/>
            <person name="Schoenbach C."/>
            <person name="Sekiguchi K."/>
            <person name="Semple C.A."/>
            <person name="Seno S."/>
            <person name="Sessa L."/>
            <person name="Sheng Y."/>
            <person name="Shibata Y."/>
            <person name="Shimada H."/>
            <person name="Shimada K."/>
            <person name="Silva D."/>
            <person name="Sinclair B."/>
            <person name="Sperling S."/>
            <person name="Stupka E."/>
            <person name="Sugiura K."/>
            <person name="Sultana R."/>
            <person name="Takenaka Y."/>
            <person name="Taki K."/>
            <person name="Tammoja K."/>
            <person name="Tan S.L."/>
            <person name="Tang S."/>
            <person name="Taylor M.S."/>
            <person name="Tegner J."/>
            <person name="Teichmann S.A."/>
            <person name="Ueda H.R."/>
            <person name="van Nimwegen E."/>
            <person name="Verardo R."/>
            <person name="Wei C.L."/>
            <person name="Yagi K."/>
            <person name="Yamanishi H."/>
            <person name="Zabarovsky E."/>
            <person name="Zhu S."/>
            <person name="Zimmer A."/>
            <person name="Hide W."/>
            <person name="Bult C."/>
            <person name="Grimmond S.M."/>
            <person name="Teasdale R.D."/>
            <person name="Liu E.T."/>
            <person name="Brusic V."/>
            <person name="Quackenbush J."/>
            <person name="Wahlestedt C."/>
            <person name="Mattick J.S."/>
            <person name="Hume D.A."/>
            <person name="Kai C."/>
            <person name="Sasaki D."/>
            <person name="Tomaru Y."/>
            <person name="Fukuda S."/>
            <person name="Kanamori-Katayama M."/>
            <person name="Suzuki M."/>
            <person name="Aoki J."/>
            <person name="Arakawa T."/>
            <person name="Iida J."/>
            <person name="Imamura K."/>
            <person name="Itoh M."/>
            <person name="Kato T."/>
            <person name="Kawaji H."/>
            <person name="Kawagashira N."/>
            <person name="Kawashima T."/>
            <person name="Kojima M."/>
            <person name="Kondo S."/>
            <person name="Konno H."/>
            <person name="Nakano K."/>
            <person name="Ninomiya N."/>
            <person name="Nishio T."/>
            <person name="Okada M."/>
            <person name="Plessy C."/>
            <person name="Shibata K."/>
            <person name="Shiraki T."/>
            <person name="Suzuki S."/>
            <person name="Tagami M."/>
            <person name="Waki K."/>
            <person name="Watahiki A."/>
            <person name="Okamura-Oho Y."/>
            <person name="Suzuki H."/>
            <person name="Kawai J."/>
            <person name="Hayashizaki Y."/>
        </authorList>
    </citation>
    <scope>NUCLEOTIDE SEQUENCE [LARGE SCALE MRNA]</scope>
    <source>
        <strain>C57BL/6J</strain>
        <tissue>Egg</tissue>
        <tissue>Embryo</tissue>
        <tissue>Testis</tissue>
    </source>
</reference>
<reference key="3">
    <citation type="journal article" date="2004" name="Genome Res.">
        <title>The status, quality, and expansion of the NIH full-length cDNA project: the Mammalian Gene Collection (MGC).</title>
        <authorList>
            <consortium name="The MGC Project Team"/>
        </authorList>
    </citation>
    <scope>NUCLEOTIDE SEQUENCE [LARGE SCALE MRNA]</scope>
    <source>
        <strain>FVB/N</strain>
        <tissue>Mammary tumor</tissue>
    </source>
</reference>
<reference key="4">
    <citation type="journal article" date="2001" name="Biochem. Biophys. Res. Commun.">
        <title>Isolation and characterization of cultured human periodontal ligament fibroblast-specific cDNAs.</title>
        <authorList>
            <person name="Park J.-C."/>
            <person name="Kim Y.-B."/>
            <person name="Kim H.-J."/>
            <person name="Jang H.-S."/>
            <person name="Kim H.-S."/>
            <person name="Kim B.-O."/>
            <person name="Han K.-Y."/>
        </authorList>
    </citation>
    <scope>TISSUE SPECIFICITY</scope>
</reference>
<name>UNC50_MOUSE</name>
<accession>Q9CQ61</accession>